<comment type="function">
    <text evidence="1">Subunit of the V1 complex of vacuolar(H+)-ATPase (V-ATPase), a multisubunit enzyme composed of a peripheral complex (V1) that hydrolyzes ATP and a membrane integral complex (V0) that translocates protons. V-ATPase is responsible for acidifying and maintaining the pH of intracellular compartments and in some cell types, is targeted to the plasma membrane, where it is responsible for acidifying the extracellular environment.</text>
</comment>
<comment type="subunit">
    <text evidence="1">V-ATPase is a heteromultimeric enzyme made up of two complexes: the ATP-hydrolytic V1 complex and the proton translocation V0 complex. The V1 complex consists of three catalytic AB heterodimers that form a heterohexamer, three peripheral stalks each consisting of EG heterodimers, one central rotor including subunits D and F, and the regulatory subunits C and H. The proton translocation complex V0 consists of the proton transport subunit a, a ring of proteolipid subunits c9c'', rotary subunit d, subunits e and f, and the accessory subunits ATP6AP1/Ac45 and ATP6AP2/PRR.</text>
</comment>
<comment type="subcellular location">
    <subcellularLocation>
        <location evidence="2">Melanosome</location>
    </subcellularLocation>
    <subcellularLocation>
        <location evidence="3">Cytoplasmic vesicle</location>
        <location evidence="3">Clathrin-coated vesicle membrane</location>
        <topology evidence="5">Peripheral membrane protein</topology>
    </subcellularLocation>
    <text evidence="2">Highly enriched in late-stage melanosomes.</text>
</comment>
<comment type="similarity">
    <text evidence="5">Belongs to the V-ATPase G subunit family.</text>
</comment>
<name>VATG2_PANTR</name>
<sequence>MASQSQGIQQLLQAEKRAAEKVADARKRKARRLKQAKEEAQMEVEQYRREREHEFQSKQQAAMGSQGNLSAEVEQATRHQVQGMQSSQQRNRERVLAQLLGMVCDVRPQVHPNYRISA</sequence>
<reference key="1">
    <citation type="journal article" date="2006" name="Genetics">
        <title>Rapid evolution of major histocompatibility complex class I genes in primates generates new disease alleles in humans via hitchhiking diversity.</title>
        <authorList>
            <person name="Shiina T."/>
            <person name="Ota M."/>
            <person name="Shimizu S."/>
            <person name="Katsuyama Y."/>
            <person name="Hashimoto N."/>
            <person name="Takasu M."/>
            <person name="Anzai T."/>
            <person name="Kulski J.K."/>
            <person name="Kikkawa E."/>
            <person name="Naruse T."/>
            <person name="Kimura N."/>
            <person name="Yanagiya K."/>
            <person name="Watanabe A."/>
            <person name="Hosomichi K."/>
            <person name="Kohara S."/>
            <person name="Iwamoto C."/>
            <person name="Umehara Y."/>
            <person name="Meyer A."/>
            <person name="Wanner V."/>
            <person name="Sano K."/>
            <person name="Macquin C."/>
            <person name="Ikeo K."/>
            <person name="Tokunaga K."/>
            <person name="Gojobori T."/>
            <person name="Inoko H."/>
            <person name="Bahram S."/>
        </authorList>
    </citation>
    <scope>NUCLEOTIDE SEQUENCE [LARGE SCALE GENOMIC DNA]</scope>
</reference>
<keyword id="KW-0968">Cytoplasmic vesicle</keyword>
<keyword id="KW-0375">Hydrogen ion transport</keyword>
<keyword id="KW-0406">Ion transport</keyword>
<keyword id="KW-0472">Membrane</keyword>
<keyword id="KW-1185">Reference proteome</keyword>
<keyword id="KW-0813">Transport</keyword>
<evidence type="ECO:0000250" key="1">
    <source>
        <dbReference type="UniProtKB" id="O75348"/>
    </source>
</evidence>
<evidence type="ECO:0000250" key="2">
    <source>
        <dbReference type="UniProtKB" id="O95670"/>
    </source>
</evidence>
<evidence type="ECO:0000250" key="3">
    <source>
        <dbReference type="UniProtKB" id="Q0VCV6"/>
    </source>
</evidence>
<evidence type="ECO:0000256" key="4">
    <source>
        <dbReference type="SAM" id="MobiDB-lite"/>
    </source>
</evidence>
<evidence type="ECO:0000305" key="5"/>
<protein>
    <recommendedName>
        <fullName>V-type proton ATPase subunit G 2</fullName>
        <shortName>V-ATPase subunit G 2</shortName>
    </recommendedName>
    <alternativeName>
        <fullName>Vacuolar proton pump subunit G 2</fullName>
    </alternativeName>
</protein>
<organism>
    <name type="scientific">Pan troglodytes</name>
    <name type="common">Chimpanzee</name>
    <dbReference type="NCBI Taxonomy" id="9598"/>
    <lineage>
        <taxon>Eukaryota</taxon>
        <taxon>Metazoa</taxon>
        <taxon>Chordata</taxon>
        <taxon>Craniata</taxon>
        <taxon>Vertebrata</taxon>
        <taxon>Euteleostomi</taxon>
        <taxon>Mammalia</taxon>
        <taxon>Eutheria</taxon>
        <taxon>Euarchontoglires</taxon>
        <taxon>Primates</taxon>
        <taxon>Haplorrhini</taxon>
        <taxon>Catarrhini</taxon>
        <taxon>Hominidae</taxon>
        <taxon>Pan</taxon>
    </lineage>
</organism>
<dbReference type="EMBL" id="AB210169">
    <property type="protein sequence ID" value="BAE92778.1"/>
    <property type="molecule type" value="Genomic_DNA"/>
</dbReference>
<dbReference type="EMBL" id="AB210170">
    <property type="protein sequence ID" value="BAE92781.1"/>
    <property type="molecule type" value="Genomic_DNA"/>
</dbReference>
<dbReference type="RefSeq" id="NP_001107639.1">
    <property type="nucleotide sequence ID" value="NM_001114167.1"/>
</dbReference>
<dbReference type="SMR" id="Q1XHY9"/>
<dbReference type="FunCoup" id="Q1XHY9">
    <property type="interactions" value="956"/>
</dbReference>
<dbReference type="GeneID" id="744244"/>
<dbReference type="KEGG" id="ptr:744244"/>
<dbReference type="CTD" id="534"/>
<dbReference type="InParanoid" id="Q1XHY9"/>
<dbReference type="OrthoDB" id="17262at9604"/>
<dbReference type="Proteomes" id="UP000002277">
    <property type="component" value="Unplaced"/>
</dbReference>
<dbReference type="GO" id="GO:0030665">
    <property type="term" value="C:clathrin-coated vesicle membrane"/>
    <property type="evidence" value="ECO:0007669"/>
    <property type="project" value="UniProtKB-SubCell"/>
</dbReference>
<dbReference type="GO" id="GO:0042470">
    <property type="term" value="C:melanosome"/>
    <property type="evidence" value="ECO:0007669"/>
    <property type="project" value="UniProtKB-SubCell"/>
</dbReference>
<dbReference type="GO" id="GO:0030672">
    <property type="term" value="C:synaptic vesicle membrane"/>
    <property type="evidence" value="ECO:0000318"/>
    <property type="project" value="GO_Central"/>
</dbReference>
<dbReference type="GO" id="GO:0000221">
    <property type="term" value="C:vacuolar proton-transporting V-type ATPase, V1 domain"/>
    <property type="evidence" value="ECO:0000250"/>
    <property type="project" value="UniProtKB"/>
</dbReference>
<dbReference type="GO" id="GO:0016887">
    <property type="term" value="F:ATP hydrolysis activity"/>
    <property type="evidence" value="ECO:0000318"/>
    <property type="project" value="GO_Central"/>
</dbReference>
<dbReference type="GO" id="GO:0046961">
    <property type="term" value="F:proton-transporting ATPase activity, rotational mechanism"/>
    <property type="evidence" value="ECO:0000318"/>
    <property type="project" value="GO_Central"/>
</dbReference>
<dbReference type="GO" id="GO:0097401">
    <property type="term" value="P:synaptic vesicle lumen acidification"/>
    <property type="evidence" value="ECO:0000318"/>
    <property type="project" value="GO_Central"/>
</dbReference>
<dbReference type="FunFam" id="1.20.5.2950:FF:000001">
    <property type="entry name" value="V-type proton ATPase subunit G"/>
    <property type="match status" value="1"/>
</dbReference>
<dbReference type="FunFam" id="1.20.5.620:FF:000004">
    <property type="entry name" value="V-type proton ATPase subunit G"/>
    <property type="match status" value="1"/>
</dbReference>
<dbReference type="Gene3D" id="1.20.5.2950">
    <property type="match status" value="1"/>
</dbReference>
<dbReference type="InterPro" id="IPR005124">
    <property type="entry name" value="V-ATPase_G"/>
</dbReference>
<dbReference type="NCBIfam" id="TIGR01147">
    <property type="entry name" value="V_ATP_synt_G"/>
    <property type="match status" value="1"/>
</dbReference>
<dbReference type="PANTHER" id="PTHR12713:SF13">
    <property type="entry name" value="V-TYPE PROTON ATPASE SUBUNIT G 2"/>
    <property type="match status" value="1"/>
</dbReference>
<dbReference type="PANTHER" id="PTHR12713">
    <property type="entry name" value="VACUOLAR ATP SYNTHASE SUBUNIT G"/>
    <property type="match status" value="1"/>
</dbReference>
<dbReference type="Pfam" id="PF03179">
    <property type="entry name" value="V-ATPase_G"/>
    <property type="match status" value="1"/>
</dbReference>
<accession>Q1XHY9</accession>
<accession>Q1XHZ2</accession>
<gene>
    <name type="primary">ATP6V1G2</name>
</gene>
<feature type="chain" id="PRO_0000235188" description="V-type proton ATPase subunit G 2">
    <location>
        <begin position="1"/>
        <end position="118"/>
    </location>
</feature>
<feature type="region of interest" description="Disordered" evidence="4">
    <location>
        <begin position="25"/>
        <end position="90"/>
    </location>
</feature>
<feature type="compositionally biased region" description="Basic and acidic residues" evidence="4">
    <location>
        <begin position="35"/>
        <end position="56"/>
    </location>
</feature>
<feature type="compositionally biased region" description="Polar residues" evidence="4">
    <location>
        <begin position="57"/>
        <end position="69"/>
    </location>
</feature>
<feature type="compositionally biased region" description="Polar residues" evidence="4">
    <location>
        <begin position="78"/>
        <end position="89"/>
    </location>
</feature>
<proteinExistence type="inferred from homology"/>